<sequence>MSSEERSRQPSTVSTFDLEPNPFEQSFASSKKALSLPGTISHPSLPKELSRNNSTSTITQHSQRSTHSLNSIPEENGNSTVTDNSNHNDVKKDSPSFLPGQQRPTIISPPILTPGGSKRLPPLLLSPSILYQANSTTNPSQNSHSVSVSNSNPSAIGVSSTSGSLYPNSSSPSGTSLIRQPRNSNVTTSNSGNGFPTNDSQMPGFLLNLSKSGLTPNESNIRTGLTPGILTQSYNYPVLPSINKNTITGSKNVNKSVTVNGSIENHPHVNIMHPTVNGTPLTPGLSSLLNLPSTGVLANPVFKSTPTTNTTDGTVNNSISNSNFSPNTSTKAAVKMDNPAEFNAIEHSAHNHKENENLTTQIENNDQFNNKTRKRKRRMSSTSSTSKASRKNSISRKNSAVTTAPAQKDDVENNKISNNVTLDENEEQERKRKEFLERNRVAASKFRKRKKEYIKKIENDLQFYESEYDDLTQVIGKLCGIIPSSSSNSQFNVNVSTPSSSSPPSTSLIALLESSISRSDYSSAMSVLSNMKQLICETNFYRRGGKNPRDDMDGQEDSFNKDTNVVKSENAGYPSVNSRPIILDKKYSLNSGANISKSNTTTNNVGNSAQNIINSCYSVTNPLVINANSDTHDTNKHDVLSTLPHNN</sequence>
<organism>
    <name type="scientific">Saccharomyces cerevisiae (strain ATCC 204508 / S288c)</name>
    <name type="common">Baker's yeast</name>
    <dbReference type="NCBI Taxonomy" id="559292"/>
    <lineage>
        <taxon>Eukaryota</taxon>
        <taxon>Fungi</taxon>
        <taxon>Dikarya</taxon>
        <taxon>Ascomycota</taxon>
        <taxon>Saccharomycotina</taxon>
        <taxon>Saccharomycetes</taxon>
        <taxon>Saccharomycetales</taxon>
        <taxon>Saccharomycetaceae</taxon>
        <taxon>Saccharomyces</taxon>
    </lineage>
</organism>
<gene>
    <name type="primary">SKO1</name>
    <name type="synonym">ACR1</name>
    <name type="ordered locus">YNL167C</name>
    <name type="ORF">N1702</name>
</gene>
<protein>
    <recommendedName>
        <fullName>CRE-binding bZIP protein SKO1</fullName>
    </recommendedName>
</protein>
<accession>Q02100</accession>
<accession>D6W115</accession>
<name>SKO1_YEAST</name>
<keyword id="KW-0238">DNA-binding</keyword>
<keyword id="KW-0539">Nucleus</keyword>
<keyword id="KW-0597">Phosphoprotein</keyword>
<keyword id="KW-1185">Reference proteome</keyword>
<keyword id="KW-0678">Repressor</keyword>
<keyword id="KW-0804">Transcription</keyword>
<keyword id="KW-0805">Transcription regulation</keyword>
<feature type="chain" id="PRO_0000076517" description="CRE-binding bZIP protein SKO1">
    <location>
        <begin position="1"/>
        <end position="647"/>
    </location>
</feature>
<feature type="domain" description="bZIP" evidence="1">
    <location>
        <begin position="429"/>
        <end position="492"/>
    </location>
</feature>
<feature type="region of interest" description="Disordered" evidence="2">
    <location>
        <begin position="1"/>
        <end position="119"/>
    </location>
</feature>
<feature type="region of interest" description="Disordered" evidence="2">
    <location>
        <begin position="135"/>
        <end position="204"/>
    </location>
</feature>
<feature type="region of interest" description="Disordered" evidence="2">
    <location>
        <begin position="305"/>
        <end position="331"/>
    </location>
</feature>
<feature type="region of interest" description="Disordered" evidence="2">
    <location>
        <begin position="353"/>
        <end position="429"/>
    </location>
</feature>
<feature type="region of interest" description="Basic motif" evidence="1">
    <location>
        <begin position="430"/>
        <end position="451"/>
    </location>
</feature>
<feature type="region of interest" description="Leucine-zipper" evidence="1">
    <location>
        <begin position="454"/>
        <end position="461"/>
    </location>
</feature>
<feature type="compositionally biased region" description="Polar residues" evidence="2">
    <location>
        <begin position="51"/>
        <end position="85"/>
    </location>
</feature>
<feature type="compositionally biased region" description="Low complexity" evidence="2">
    <location>
        <begin position="138"/>
        <end position="194"/>
    </location>
</feature>
<feature type="compositionally biased region" description="Low complexity" evidence="2">
    <location>
        <begin position="305"/>
        <end position="329"/>
    </location>
</feature>
<feature type="compositionally biased region" description="Polar residues" evidence="2">
    <location>
        <begin position="357"/>
        <end position="368"/>
    </location>
</feature>
<feature type="compositionally biased region" description="Polar residues" evidence="2">
    <location>
        <begin position="396"/>
        <end position="405"/>
    </location>
</feature>
<feature type="modified residue" description="Phosphoserine" evidence="6">
    <location>
        <position position="94"/>
    </location>
</feature>
<feature type="modified residue" description="Phosphothreonine" evidence="6">
    <location>
        <position position="113"/>
    </location>
</feature>
<feature type="modified residue" description="Phosphoserine" evidence="5 6">
    <location>
        <position position="399"/>
    </location>
</feature>
<feature type="modified residue" description="Phosphoserine" evidence="6">
    <location>
        <position position="558"/>
    </location>
</feature>
<reference key="1">
    <citation type="journal article" date="1992" name="Nucleic Acids Res.">
        <title>Yeast SKO1 gene encodes a bZIP protein that binds to the CRE motif and acts as a repressor of transcription.</title>
        <authorList>
            <person name="Nehlin J.O."/>
            <person name="Carlberg M."/>
            <person name="Ronne H."/>
        </authorList>
    </citation>
    <scope>NUCLEOTIDE SEQUENCE [GENOMIC DNA]</scope>
    <source>
        <strain>ATCC 208353 / W303-1A</strain>
    </source>
</reference>
<reference key="2">
    <citation type="journal article" date="1992" name="Mol. Cell. Biol.">
        <title>ACR1, a yeast ATF/CREB repressor.</title>
        <authorList>
            <person name="Vincent A.C."/>
            <person name="Struhl K."/>
        </authorList>
    </citation>
    <scope>NUCLEOTIDE SEQUENCE [GENOMIC DNA]</scope>
</reference>
<reference key="3">
    <citation type="journal article" date="1996" name="Yeast">
        <title>The sequence of 36.8 kb from the left arm of chromosome XIV reveals 24 complete open reading frames: 18 correspond to new genes, one of which encodes a protein similar to the human myotonic dystrophy kinase.</title>
        <authorList>
            <person name="Nasr F."/>
            <person name="Becam A.-M."/>
            <person name="Herbert C.J."/>
        </authorList>
    </citation>
    <scope>NUCLEOTIDE SEQUENCE [GENOMIC DNA]</scope>
    <source>
        <strain>ATCC 96604 / S288c / FY1679</strain>
    </source>
</reference>
<reference key="4">
    <citation type="journal article" date="1997" name="Nature">
        <title>The nucleotide sequence of Saccharomyces cerevisiae chromosome XIV and its evolutionary implications.</title>
        <authorList>
            <person name="Philippsen P."/>
            <person name="Kleine K."/>
            <person name="Poehlmann R."/>
            <person name="Duesterhoeft A."/>
            <person name="Hamberg K."/>
            <person name="Hegemann J.H."/>
            <person name="Obermaier B."/>
            <person name="Urrestarazu L.A."/>
            <person name="Aert R."/>
            <person name="Albermann K."/>
            <person name="Altmann R."/>
            <person name="Andre B."/>
            <person name="Baladron V."/>
            <person name="Ballesta J.P.G."/>
            <person name="Becam A.-M."/>
            <person name="Beinhauer J.D."/>
            <person name="Boskovic J."/>
            <person name="Buitrago M.J."/>
            <person name="Bussereau F."/>
            <person name="Coster F."/>
            <person name="Crouzet M."/>
            <person name="D'Angelo M."/>
            <person name="Dal Pero F."/>
            <person name="De Antoni A."/>
            <person name="del Rey F."/>
            <person name="Doignon F."/>
            <person name="Domdey H."/>
            <person name="Dubois E."/>
            <person name="Fiedler T.A."/>
            <person name="Fleig U."/>
            <person name="Floeth M."/>
            <person name="Fritz C."/>
            <person name="Gaillardin C."/>
            <person name="Garcia-Cantalejo J.M."/>
            <person name="Glansdorff N."/>
            <person name="Goffeau A."/>
            <person name="Gueldener U."/>
            <person name="Herbert C.J."/>
            <person name="Heumann K."/>
            <person name="Heuss-Neitzel D."/>
            <person name="Hilbert H."/>
            <person name="Hinni K."/>
            <person name="Iraqui Houssaini I."/>
            <person name="Jacquet M."/>
            <person name="Jimenez A."/>
            <person name="Jonniaux J.-L."/>
            <person name="Karpfinger-Hartl L."/>
            <person name="Lanfranchi G."/>
            <person name="Lepingle A."/>
            <person name="Levesque H."/>
            <person name="Lyck R."/>
            <person name="Maftahi M."/>
            <person name="Mallet L."/>
            <person name="Maurer C.T.C."/>
            <person name="Messenguy F."/>
            <person name="Mewes H.-W."/>
            <person name="Moestl D."/>
            <person name="Nasr F."/>
            <person name="Nicaud J.-M."/>
            <person name="Niedenthal R.K."/>
            <person name="Pandolfo D."/>
            <person name="Pierard A."/>
            <person name="Piravandi E."/>
            <person name="Planta R.J."/>
            <person name="Pohl T.M."/>
            <person name="Purnelle B."/>
            <person name="Rebischung C."/>
            <person name="Remacha M.A."/>
            <person name="Revuelta J.L."/>
            <person name="Rinke M."/>
            <person name="Saiz J.E."/>
            <person name="Sartorello F."/>
            <person name="Scherens B."/>
            <person name="Sen-Gupta M."/>
            <person name="Soler-Mira A."/>
            <person name="Urbanus J.H.M."/>
            <person name="Valle G."/>
            <person name="Van Dyck L."/>
            <person name="Verhasselt P."/>
            <person name="Vierendeels F."/>
            <person name="Vissers S."/>
            <person name="Voet M."/>
            <person name="Volckaert G."/>
            <person name="Wach A."/>
            <person name="Wambutt R."/>
            <person name="Wedler H."/>
            <person name="Zollner A."/>
            <person name="Hani J."/>
        </authorList>
    </citation>
    <scope>NUCLEOTIDE SEQUENCE [LARGE SCALE GENOMIC DNA]</scope>
    <source>
        <strain>ATCC 204508 / S288c</strain>
    </source>
</reference>
<reference key="5">
    <citation type="journal article" date="2014" name="G3 (Bethesda)">
        <title>The reference genome sequence of Saccharomyces cerevisiae: Then and now.</title>
        <authorList>
            <person name="Engel S.R."/>
            <person name="Dietrich F.S."/>
            <person name="Fisk D.G."/>
            <person name="Binkley G."/>
            <person name="Balakrishnan R."/>
            <person name="Costanzo M.C."/>
            <person name="Dwight S.S."/>
            <person name="Hitz B.C."/>
            <person name="Karra K."/>
            <person name="Nash R.S."/>
            <person name="Weng S."/>
            <person name="Wong E.D."/>
            <person name="Lloyd P."/>
            <person name="Skrzypek M.S."/>
            <person name="Miyasato S.R."/>
            <person name="Simison M."/>
            <person name="Cherry J.M."/>
        </authorList>
    </citation>
    <scope>GENOME REANNOTATION</scope>
    <source>
        <strain>ATCC 204508 / S288c</strain>
    </source>
</reference>
<reference key="6">
    <citation type="journal article" date="2003" name="Nature">
        <title>Global analysis of protein expression in yeast.</title>
        <authorList>
            <person name="Ghaemmaghami S."/>
            <person name="Huh W.-K."/>
            <person name="Bower K."/>
            <person name="Howson R.W."/>
            <person name="Belle A."/>
            <person name="Dephoure N."/>
            <person name="O'Shea E.K."/>
            <person name="Weissman J.S."/>
        </authorList>
    </citation>
    <scope>LEVEL OF PROTEIN EXPRESSION [LARGE SCALE ANALYSIS]</scope>
</reference>
<reference key="7">
    <citation type="journal article" date="2008" name="Mol. Cell. Proteomics">
        <title>A multidimensional chromatography technology for in-depth phosphoproteome analysis.</title>
        <authorList>
            <person name="Albuquerque C.P."/>
            <person name="Smolka M.B."/>
            <person name="Payne S.H."/>
            <person name="Bafna V."/>
            <person name="Eng J."/>
            <person name="Zhou H."/>
        </authorList>
    </citation>
    <scope>PHOSPHORYLATION [LARGE SCALE ANALYSIS] AT SER-399</scope>
    <scope>IDENTIFICATION BY MASS SPECTROMETRY [LARGE SCALE ANALYSIS]</scope>
</reference>
<reference key="8">
    <citation type="journal article" date="2009" name="Science">
        <title>Global analysis of Cdk1 substrate phosphorylation sites provides insights into evolution.</title>
        <authorList>
            <person name="Holt L.J."/>
            <person name="Tuch B.B."/>
            <person name="Villen J."/>
            <person name="Johnson A.D."/>
            <person name="Gygi S.P."/>
            <person name="Morgan D.O."/>
        </authorList>
    </citation>
    <scope>PHOSPHORYLATION [LARGE SCALE ANALYSIS] AT SER-94; THR-113; SER-399 AND SER-558</scope>
    <scope>IDENTIFICATION BY MASS SPECTROMETRY [LARGE SCALE ANALYSIS]</scope>
</reference>
<evidence type="ECO:0000255" key="1">
    <source>
        <dbReference type="PROSITE-ProRule" id="PRU00978"/>
    </source>
</evidence>
<evidence type="ECO:0000256" key="2">
    <source>
        <dbReference type="SAM" id="MobiDB-lite"/>
    </source>
</evidence>
<evidence type="ECO:0000269" key="3">
    <source>
    </source>
</evidence>
<evidence type="ECO:0000305" key="4"/>
<evidence type="ECO:0007744" key="5">
    <source>
    </source>
</evidence>
<evidence type="ECO:0007744" key="6">
    <source>
    </source>
</evidence>
<dbReference type="EMBL" id="X67875">
    <property type="protein sequence ID" value="CAA48074.1"/>
    <property type="molecule type" value="Genomic_DNA"/>
</dbReference>
<dbReference type="EMBL" id="S49588">
    <property type="protein sequence ID" value="AAB24288.1"/>
    <property type="molecule type" value="Genomic_DNA"/>
</dbReference>
<dbReference type="EMBL" id="X92517">
    <property type="protein sequence ID" value="CAA63272.1"/>
    <property type="molecule type" value="Genomic_DNA"/>
</dbReference>
<dbReference type="EMBL" id="Z71443">
    <property type="protein sequence ID" value="CAA96054.1"/>
    <property type="molecule type" value="Genomic_DNA"/>
</dbReference>
<dbReference type="EMBL" id="BK006947">
    <property type="protein sequence ID" value="DAA10381.1"/>
    <property type="molecule type" value="Genomic_DNA"/>
</dbReference>
<dbReference type="PIR" id="S26386">
    <property type="entry name" value="S26386"/>
</dbReference>
<dbReference type="RefSeq" id="NP_014232.1">
    <property type="nucleotide sequence ID" value="NM_001183005.1"/>
</dbReference>
<dbReference type="SMR" id="Q02100"/>
<dbReference type="BioGRID" id="35661">
    <property type="interactions" value="84"/>
</dbReference>
<dbReference type="DIP" id="DIP-700N"/>
<dbReference type="FunCoup" id="Q02100">
    <property type="interactions" value="1156"/>
</dbReference>
<dbReference type="IntAct" id="Q02100">
    <property type="interactions" value="5"/>
</dbReference>
<dbReference type="MINT" id="Q02100"/>
<dbReference type="STRING" id="4932.YNL167C"/>
<dbReference type="GlyGen" id="Q02100">
    <property type="glycosylation" value="1 site, 1 O-linked glycan (1 site)"/>
</dbReference>
<dbReference type="iPTMnet" id="Q02100"/>
<dbReference type="PaxDb" id="4932-YNL167C"/>
<dbReference type="PeptideAtlas" id="Q02100"/>
<dbReference type="EnsemblFungi" id="YNL167C_mRNA">
    <property type="protein sequence ID" value="YNL167C"/>
    <property type="gene ID" value="YNL167C"/>
</dbReference>
<dbReference type="GeneID" id="855554"/>
<dbReference type="KEGG" id="sce:YNL167C"/>
<dbReference type="AGR" id="SGD:S000005111"/>
<dbReference type="SGD" id="S000005111">
    <property type="gene designation" value="SKO1"/>
</dbReference>
<dbReference type="VEuPathDB" id="FungiDB:YNL167C"/>
<dbReference type="eggNOG" id="KOG1414">
    <property type="taxonomic scope" value="Eukaryota"/>
</dbReference>
<dbReference type="GeneTree" id="ENSGT00940000176028"/>
<dbReference type="HOGENOM" id="CLU_027901_0_0_1"/>
<dbReference type="InParanoid" id="Q02100"/>
<dbReference type="OMA" id="HGAFMSQ"/>
<dbReference type="OrthoDB" id="295274at2759"/>
<dbReference type="BioCyc" id="YEAST:G3O-33183-MONOMER"/>
<dbReference type="Reactome" id="R-SCE-3214847">
    <property type="pathway name" value="HATs acetylate histones"/>
</dbReference>
<dbReference type="Reactome" id="R-SCE-450341">
    <property type="pathway name" value="Activation of the AP-1 family of transcription factors"/>
</dbReference>
<dbReference type="BioGRID-ORCS" id="855554">
    <property type="hits" value="1 hit in 13 CRISPR screens"/>
</dbReference>
<dbReference type="PRO" id="PR:Q02100"/>
<dbReference type="Proteomes" id="UP000002311">
    <property type="component" value="Chromosome XIV"/>
</dbReference>
<dbReference type="RNAct" id="Q02100">
    <property type="molecule type" value="protein"/>
</dbReference>
<dbReference type="GO" id="GO:0005829">
    <property type="term" value="C:cytosol"/>
    <property type="evidence" value="ECO:0000314"/>
    <property type="project" value="SGD"/>
</dbReference>
<dbReference type="GO" id="GO:0005634">
    <property type="term" value="C:nucleus"/>
    <property type="evidence" value="ECO:0000314"/>
    <property type="project" value="SGD"/>
</dbReference>
<dbReference type="GO" id="GO:0001228">
    <property type="term" value="F:DNA-binding transcription activator activity, RNA polymerase II-specific"/>
    <property type="evidence" value="ECO:0000314"/>
    <property type="project" value="SGD"/>
</dbReference>
<dbReference type="GO" id="GO:0000981">
    <property type="term" value="F:DNA-binding transcription factor activity, RNA polymerase II-specific"/>
    <property type="evidence" value="ECO:0000315"/>
    <property type="project" value="SGD"/>
</dbReference>
<dbReference type="GO" id="GO:0001227">
    <property type="term" value="F:DNA-binding transcription repressor activity, RNA polymerase II-specific"/>
    <property type="evidence" value="ECO:0000314"/>
    <property type="project" value="SGD"/>
</dbReference>
<dbReference type="GO" id="GO:0051019">
    <property type="term" value="F:mitogen-activated protein kinase binding"/>
    <property type="evidence" value="ECO:0000314"/>
    <property type="project" value="SGD"/>
</dbReference>
<dbReference type="GO" id="GO:0000978">
    <property type="term" value="F:RNA polymerase II cis-regulatory region sequence-specific DNA binding"/>
    <property type="evidence" value="ECO:0000314"/>
    <property type="project" value="SGD"/>
</dbReference>
<dbReference type="GO" id="GO:0061629">
    <property type="term" value="F:RNA polymerase II-specific DNA-binding transcription factor binding"/>
    <property type="evidence" value="ECO:0000314"/>
    <property type="project" value="SGD"/>
</dbReference>
<dbReference type="GO" id="GO:0003714">
    <property type="term" value="F:transcription corepressor activity"/>
    <property type="evidence" value="ECO:0000315"/>
    <property type="project" value="SGD"/>
</dbReference>
<dbReference type="GO" id="GO:0071470">
    <property type="term" value="P:cellular response to osmotic stress"/>
    <property type="evidence" value="ECO:0000314"/>
    <property type="project" value="SGD"/>
</dbReference>
<dbReference type="GO" id="GO:0000122">
    <property type="term" value="P:negative regulation of transcription by RNA polymerase II"/>
    <property type="evidence" value="ECO:0000315"/>
    <property type="project" value="SGD"/>
</dbReference>
<dbReference type="GO" id="GO:0045944">
    <property type="term" value="P:positive regulation of transcription by RNA polymerase II"/>
    <property type="evidence" value="ECO:0000314"/>
    <property type="project" value="SGD"/>
</dbReference>
<dbReference type="GO" id="GO:0006357">
    <property type="term" value="P:regulation of transcription by RNA polymerase II"/>
    <property type="evidence" value="ECO:0000318"/>
    <property type="project" value="GO_Central"/>
</dbReference>
<dbReference type="CDD" id="cd14687">
    <property type="entry name" value="bZIP_ATF2"/>
    <property type="match status" value="1"/>
</dbReference>
<dbReference type="FunFam" id="1.20.5.170:FF:000053">
    <property type="entry name" value="BZIP transcription factor AtfA"/>
    <property type="match status" value="1"/>
</dbReference>
<dbReference type="Gene3D" id="1.20.5.170">
    <property type="match status" value="1"/>
</dbReference>
<dbReference type="InterPro" id="IPR004827">
    <property type="entry name" value="bZIP"/>
</dbReference>
<dbReference type="InterPro" id="IPR046347">
    <property type="entry name" value="bZIP_sf"/>
</dbReference>
<dbReference type="InterPro" id="IPR051027">
    <property type="entry name" value="bZIP_transcription_factors"/>
</dbReference>
<dbReference type="InterPro" id="IPR020956">
    <property type="entry name" value="TF_Aft1_OSM"/>
</dbReference>
<dbReference type="PANTHER" id="PTHR19304">
    <property type="entry name" value="CYCLIC-AMP RESPONSE ELEMENT BINDING PROTEIN"/>
    <property type="match status" value="1"/>
</dbReference>
<dbReference type="Pfam" id="PF11785">
    <property type="entry name" value="Aft1_OSA"/>
    <property type="match status" value="1"/>
</dbReference>
<dbReference type="Pfam" id="PF00170">
    <property type="entry name" value="bZIP_1"/>
    <property type="match status" value="1"/>
</dbReference>
<dbReference type="SMART" id="SM00338">
    <property type="entry name" value="BRLZ"/>
    <property type="match status" value="1"/>
</dbReference>
<dbReference type="SUPFAM" id="SSF57959">
    <property type="entry name" value="Leucine zipper domain"/>
    <property type="match status" value="1"/>
</dbReference>
<dbReference type="PROSITE" id="PS50217">
    <property type="entry name" value="BZIP"/>
    <property type="match status" value="1"/>
</dbReference>
<comment type="function">
    <text>Binds to the CRE motif 5'-TGACGTCA-3' and acts as a repressor of transcription of the SUC2 gene and most probably other genes.</text>
</comment>
<comment type="subcellular location">
    <subcellularLocation>
        <location>Nucleus</location>
    </subcellularLocation>
</comment>
<comment type="miscellaneous">
    <text evidence="3">Present with 504 molecules/cell in log phase SD medium.</text>
</comment>
<comment type="similarity">
    <text evidence="4">Belongs to the bZIP family.</text>
</comment>
<proteinExistence type="evidence at protein level"/>